<sequence>MQWPTLWAFSGLLCLCPSQALGQERGACPDVKVVGLGAQDKVVVIQSCPGFPGPPGPKGEPGSPAGRGERGFQGSPGKMGPAGSKGEPGTMGPPGVKGEKGDTGAAPSLGEKELGDTLCQRGPRSCKDLLTRGIFLTGWYTIHLPDCRPLTVLCDMDVDGGGWTVFQRRVDGSIDFFRDWDSYKRGFGNLGTEFWLGNDYLHLLTANGNQELRVDLQDFQGKGSYAKYSSFQVSEEQEKYKLTLGQFLEGTAGDSLTKHNNMSFTTHDQDNDANSMNCAALFHGAWWYHNCHQSNLNGRYLSGSHESYADGINWGTGQGHHYSYKVAEMKIRAS</sequence>
<keyword id="KW-0106">Calcium</keyword>
<keyword id="KW-1003">Cell membrane</keyword>
<keyword id="KW-0176">Collagen</keyword>
<keyword id="KW-0903">Direct protein sequencing</keyword>
<keyword id="KW-1015">Disulfide bond</keyword>
<keyword id="KW-0325">Glycoprotein</keyword>
<keyword id="KW-0391">Immunity</keyword>
<keyword id="KW-0399">Innate immunity</keyword>
<keyword id="KW-0430">Lectin</keyword>
<keyword id="KW-0472">Membrane</keyword>
<keyword id="KW-0479">Metal-binding</keyword>
<keyword id="KW-1185">Reference proteome</keyword>
<keyword id="KW-0677">Repeat</keyword>
<keyword id="KW-0964">Secreted</keyword>
<keyword id="KW-0732">Signal</keyword>
<name>FCN1_MOUSE</name>
<reference key="1">
    <citation type="journal article" date="1998" name="Biochem. Biophys. Res. Commun.">
        <title>Molecular cloning and characterization of mouse ficolin-A.</title>
        <authorList>
            <person name="Fujimori Y."/>
            <person name="Harumiya S."/>
            <person name="Fukumoto Y."/>
            <person name="Miura Y."/>
            <person name="Yagasaki K."/>
            <person name="Tachikawa H."/>
            <person name="Fujimoto D."/>
        </authorList>
    </citation>
    <scope>NUCLEOTIDE SEQUENCE [MRNA]</scope>
    <source>
        <strain>BALB/cJ</strain>
        <tissue>Liver</tissue>
    </source>
</reference>
<reference key="2">
    <citation type="journal article" date="2004" name="Genome Res.">
        <title>The status, quality, and expansion of the NIH full-length cDNA project: the Mammalian Gene Collection (MGC).</title>
        <authorList>
            <consortium name="The MGC Project Team"/>
        </authorList>
    </citation>
    <scope>NUCLEOTIDE SEQUENCE [LARGE SCALE MRNA]</scope>
</reference>
<reference key="3">
    <citation type="journal article" date="2007" name="J. Biochem. Mol. Biol.">
        <title>Identification of a functionally relevant signal peptide of mouse ficolin A.</title>
        <authorList>
            <person name="Kwon S."/>
            <person name="Kim M.-S."/>
            <person name="Kim D."/>
            <person name="Lee K.-W."/>
            <person name="Choi S.Y."/>
            <person name="Park J."/>
            <person name="Kim Y.H."/>
            <person name="Lee Y."/>
            <person name="Kwon H.-J."/>
        </authorList>
    </citation>
    <scope>PROTEIN SEQUENCE OF 18-32</scope>
</reference>
<organism>
    <name type="scientific">Mus musculus</name>
    <name type="common">Mouse</name>
    <dbReference type="NCBI Taxonomy" id="10090"/>
    <lineage>
        <taxon>Eukaryota</taxon>
        <taxon>Metazoa</taxon>
        <taxon>Chordata</taxon>
        <taxon>Craniata</taxon>
        <taxon>Vertebrata</taxon>
        <taxon>Euteleostomi</taxon>
        <taxon>Mammalia</taxon>
        <taxon>Eutheria</taxon>
        <taxon>Euarchontoglires</taxon>
        <taxon>Glires</taxon>
        <taxon>Rodentia</taxon>
        <taxon>Myomorpha</taxon>
        <taxon>Muroidea</taxon>
        <taxon>Muridae</taxon>
        <taxon>Murinae</taxon>
        <taxon>Mus</taxon>
        <taxon>Mus</taxon>
    </lineage>
</organism>
<evidence type="ECO:0000250" key="1"/>
<evidence type="ECO:0000250" key="2">
    <source>
        <dbReference type="UniProtKB" id="O00602"/>
    </source>
</evidence>
<evidence type="ECO:0000255" key="3"/>
<evidence type="ECO:0000255" key="4">
    <source>
        <dbReference type="PROSITE-ProRule" id="PRU00739"/>
    </source>
</evidence>
<evidence type="ECO:0000256" key="5">
    <source>
        <dbReference type="SAM" id="MobiDB-lite"/>
    </source>
</evidence>
<evidence type="ECO:0000269" key="6">
    <source>
    </source>
</evidence>
<evidence type="ECO:0000305" key="7"/>
<accession>O70165</accession>
<feature type="signal peptide" evidence="6">
    <location>
        <begin position="1"/>
        <end position="17"/>
    </location>
</feature>
<feature type="chain" id="PRO_0000009137" description="Ficolin-1">
    <location>
        <begin position="18"/>
        <end position="334"/>
    </location>
</feature>
<feature type="domain" description="Collagen-like">
    <location>
        <begin position="50"/>
        <end position="88"/>
    </location>
</feature>
<feature type="domain" description="Fibrinogen C-terminal" evidence="4">
    <location>
        <begin position="117"/>
        <end position="334"/>
    </location>
</feature>
<feature type="region of interest" description="Disordered" evidence="5">
    <location>
        <begin position="47"/>
        <end position="117"/>
    </location>
</feature>
<feature type="region of interest" description="A domain; contributes to trimerization" evidence="1">
    <location>
        <begin position="123"/>
        <end position="162"/>
    </location>
</feature>
<feature type="region of interest" description="B domain; contributes to trimerization" evidence="1">
    <location>
        <begin position="163"/>
        <end position="251"/>
    </location>
</feature>
<feature type="region of interest" description="P domain" evidence="2">
    <location>
        <begin position="325"/>
        <end position="334"/>
    </location>
</feature>
<feature type="binding site" evidence="2">
    <location>
        <position position="270"/>
    </location>
    <ligand>
        <name>Ca(2+)</name>
        <dbReference type="ChEBI" id="CHEBI:29108"/>
    </ligand>
</feature>
<feature type="binding site" evidence="2">
    <location>
        <position position="272"/>
    </location>
    <ligand>
        <name>Ca(2+)</name>
        <dbReference type="ChEBI" id="CHEBI:29108"/>
    </ligand>
</feature>
<feature type="binding site" evidence="2">
    <location>
        <begin position="290"/>
        <end position="292"/>
    </location>
    <ligand>
        <name>a carbohydrate</name>
        <dbReference type="ChEBI" id="CHEBI:16646"/>
    </ligand>
</feature>
<feature type="site" description="Mediates specificity for sialic acids" evidence="2">
    <location>
        <position position="308"/>
    </location>
</feature>
<feature type="glycosylation site" description="N-linked (GlcNAc...) asparagine" evidence="3">
    <location>
        <position position="261"/>
    </location>
</feature>
<feature type="disulfide bond" evidence="4">
    <location>
        <begin position="119"/>
        <end position="147"/>
    </location>
</feature>
<feature type="disulfide bond" evidence="4">
    <location>
        <begin position="126"/>
        <end position="154"/>
    </location>
</feature>
<feature type="disulfide bond" evidence="4">
    <location>
        <begin position="278"/>
        <end position="291"/>
    </location>
</feature>
<comment type="function">
    <text evidence="1">Extracellular lectin functioning as a pattern-recognition receptor in innate immunity. Binds the sugar moieties of pathogen-associated molecular patterns (PAMPs) displayed on microbes and activates the lectin pathway of the complement system. May also activate monocytes through a G protein-coupled receptor, FFAR2, inducing the secretion of interleukin-8/IL-8. Binds preferentially to 9-O-acetylated 2-6-linked sialic acid derivatives and to various glycans containing sialic acid engaged in a 2-3 linkage (By similarity).</text>
</comment>
<comment type="subunit">
    <text evidence="2">Homotrimer. Interacts with elastin/ELN. Interacts (via Fibrinogen C-terminal domain) with FFAR2. Interacts with CRP; may regulate monocyte activation by FCN1.</text>
</comment>
<comment type="subcellular location">
    <subcellularLocation>
        <location evidence="2">Secreted</location>
    </subcellularLocation>
    <subcellularLocation>
        <location evidence="2">Cell membrane</location>
        <topology evidence="2">Peripheral membrane protein</topology>
        <orientation evidence="2">Extracellular side</orientation>
    </subcellularLocation>
    <text evidence="2">Found on the monocyte and granulocyte surface.</text>
</comment>
<comment type="tissue specificity">
    <text>Highly expressed in liver and spleen.</text>
</comment>
<comment type="domain">
    <text evidence="2">The fibrinogen C-terminal domain mediates calcium-dependent binding to carbohydrates and tethering to the cell surface in monocytes and granulocytes. The domain undergoes a conformational switch at pH under 6.2, and looses its carbohydrate-binding ability.</text>
</comment>
<comment type="similarity">
    <text evidence="7">Belongs to the ficolin lectin family.</text>
</comment>
<proteinExistence type="evidence at protein level"/>
<protein>
    <recommendedName>
        <fullName>Ficolin-1</fullName>
    </recommendedName>
    <alternativeName>
        <fullName>Collagen/fibrinogen domain-containing protein 1</fullName>
    </alternativeName>
    <alternativeName>
        <fullName>Ficolin-A</fullName>
    </alternativeName>
    <alternativeName>
        <fullName>Ficolin-alpha</fullName>
    </alternativeName>
    <alternativeName>
        <fullName>M-ficolin</fullName>
    </alternativeName>
</protein>
<gene>
    <name type="primary">Fcn1</name>
    <name type="synonym">Fcna</name>
</gene>
<dbReference type="EMBL" id="AB007813">
    <property type="protein sequence ID" value="BAA25126.1"/>
    <property type="molecule type" value="mRNA"/>
</dbReference>
<dbReference type="EMBL" id="BC019180">
    <property type="protein sequence ID" value="AAH19180.1"/>
    <property type="molecule type" value="mRNA"/>
</dbReference>
<dbReference type="CCDS" id="CCDS15785.1"/>
<dbReference type="PIR" id="JC5980">
    <property type="entry name" value="JC5980"/>
</dbReference>
<dbReference type="RefSeq" id="NP_032021.1">
    <property type="nucleotide sequence ID" value="NM_007995.3"/>
</dbReference>
<dbReference type="RefSeq" id="XP_006497736.1">
    <property type="nucleotide sequence ID" value="XM_006497673.3"/>
</dbReference>
<dbReference type="RefSeq" id="XP_011237318.1">
    <property type="nucleotide sequence ID" value="XM_011239016.2"/>
</dbReference>
<dbReference type="SMR" id="O70165"/>
<dbReference type="BioGRID" id="199622">
    <property type="interactions" value="2"/>
</dbReference>
<dbReference type="FunCoup" id="O70165">
    <property type="interactions" value="53"/>
</dbReference>
<dbReference type="STRING" id="10090.ENSMUSP00000028307"/>
<dbReference type="GlyCosmos" id="O70165">
    <property type="glycosylation" value="1 site, No reported glycans"/>
</dbReference>
<dbReference type="GlyGen" id="O70165">
    <property type="glycosylation" value="1 site"/>
</dbReference>
<dbReference type="iPTMnet" id="O70165"/>
<dbReference type="PhosphoSitePlus" id="O70165"/>
<dbReference type="CPTAC" id="non-CPTAC-3577"/>
<dbReference type="PaxDb" id="10090-ENSMUSP00000028307"/>
<dbReference type="PeptideAtlas" id="O70165"/>
<dbReference type="ProteomicsDB" id="270976"/>
<dbReference type="DNASU" id="14133"/>
<dbReference type="Ensembl" id="ENSMUST00000028307.9">
    <property type="protein sequence ID" value="ENSMUSP00000028307.9"/>
    <property type="gene ID" value="ENSMUSG00000026938.11"/>
</dbReference>
<dbReference type="GeneID" id="14133"/>
<dbReference type="KEGG" id="mmu:14133"/>
<dbReference type="UCSC" id="uc008isz.1">
    <property type="organism name" value="mouse"/>
</dbReference>
<dbReference type="AGR" id="MGI:1340905"/>
<dbReference type="CTD" id="14133"/>
<dbReference type="MGI" id="MGI:1340905">
    <property type="gene designation" value="Fcna"/>
</dbReference>
<dbReference type="VEuPathDB" id="HostDB:ENSMUSG00000026938"/>
<dbReference type="eggNOG" id="KOG2579">
    <property type="taxonomic scope" value="Eukaryota"/>
</dbReference>
<dbReference type="GeneTree" id="ENSGT00940000157531"/>
<dbReference type="HOGENOM" id="CLU_038628_3_3_1"/>
<dbReference type="InParanoid" id="O70165"/>
<dbReference type="OMA" id="RGPRSCK"/>
<dbReference type="OrthoDB" id="7735550at2759"/>
<dbReference type="PhylomeDB" id="O70165"/>
<dbReference type="TreeFam" id="TF329953"/>
<dbReference type="Reactome" id="R-MMU-166662">
    <property type="pathway name" value="Lectin pathway of complement activation"/>
</dbReference>
<dbReference type="Reactome" id="R-MMU-166663">
    <property type="pathway name" value="Initial triggering of complement"/>
</dbReference>
<dbReference type="Reactome" id="R-MMU-2855086">
    <property type="pathway name" value="Ficolins bind to repetitive carbohydrate structures on the target cell surface"/>
</dbReference>
<dbReference type="Reactome" id="R-MMU-6798695">
    <property type="pathway name" value="Neutrophil degranulation"/>
</dbReference>
<dbReference type="BioGRID-ORCS" id="14133">
    <property type="hits" value="2 hits in 76 CRISPR screens"/>
</dbReference>
<dbReference type="PRO" id="PR:O70165"/>
<dbReference type="Proteomes" id="UP000000589">
    <property type="component" value="Chromosome 2"/>
</dbReference>
<dbReference type="RNAct" id="O70165">
    <property type="molecule type" value="protein"/>
</dbReference>
<dbReference type="Bgee" id="ENSMUSG00000026938">
    <property type="expression patterns" value="Expressed in spleen and 113 other cell types or tissues"/>
</dbReference>
<dbReference type="ExpressionAtlas" id="O70165">
    <property type="expression patterns" value="baseline and differential"/>
</dbReference>
<dbReference type="GO" id="GO:0005581">
    <property type="term" value="C:collagen trimer"/>
    <property type="evidence" value="ECO:0007669"/>
    <property type="project" value="UniProtKB-KW"/>
</dbReference>
<dbReference type="GO" id="GO:0005576">
    <property type="term" value="C:extracellular region"/>
    <property type="evidence" value="ECO:0007669"/>
    <property type="project" value="UniProtKB-SubCell"/>
</dbReference>
<dbReference type="GO" id="GO:0005886">
    <property type="term" value="C:plasma membrane"/>
    <property type="evidence" value="ECO:0000250"/>
    <property type="project" value="UniProtKB"/>
</dbReference>
<dbReference type="GO" id="GO:0030246">
    <property type="term" value="F:carbohydrate binding"/>
    <property type="evidence" value="ECO:0007669"/>
    <property type="project" value="UniProtKB-KW"/>
</dbReference>
<dbReference type="GO" id="GO:0097367">
    <property type="term" value="F:carbohydrate derivative binding"/>
    <property type="evidence" value="ECO:0000314"/>
    <property type="project" value="MGI"/>
</dbReference>
<dbReference type="GO" id="GO:0046872">
    <property type="term" value="F:metal ion binding"/>
    <property type="evidence" value="ECO:0007669"/>
    <property type="project" value="UniProtKB-KW"/>
</dbReference>
<dbReference type="GO" id="GO:0038187">
    <property type="term" value="F:pattern recognition receptor activity"/>
    <property type="evidence" value="ECO:0000250"/>
    <property type="project" value="UniProtKB"/>
</dbReference>
<dbReference type="GO" id="GO:0002752">
    <property type="term" value="P:cell surface pattern recognition receptor signaling pathway"/>
    <property type="evidence" value="ECO:0000250"/>
    <property type="project" value="UniProtKB"/>
</dbReference>
<dbReference type="GO" id="GO:0001867">
    <property type="term" value="P:complement activation, lectin pathway"/>
    <property type="evidence" value="ECO:0000314"/>
    <property type="project" value="MGI"/>
</dbReference>
<dbReference type="GO" id="GO:0007186">
    <property type="term" value="P:G protein-coupled receptor signaling pathway"/>
    <property type="evidence" value="ECO:0000250"/>
    <property type="project" value="UniProtKB"/>
</dbReference>
<dbReference type="GO" id="GO:0045087">
    <property type="term" value="P:innate immune response"/>
    <property type="evidence" value="ECO:0007669"/>
    <property type="project" value="UniProtKB-KW"/>
</dbReference>
<dbReference type="GO" id="GO:0032757">
    <property type="term" value="P:positive regulation of interleukin-8 production"/>
    <property type="evidence" value="ECO:0000250"/>
    <property type="project" value="UniProtKB"/>
</dbReference>
<dbReference type="CDD" id="cd00087">
    <property type="entry name" value="FReD"/>
    <property type="match status" value="1"/>
</dbReference>
<dbReference type="FunFam" id="3.90.215.10:FF:000001">
    <property type="entry name" value="Tenascin isoform 1"/>
    <property type="match status" value="1"/>
</dbReference>
<dbReference type="Gene3D" id="3.90.215.10">
    <property type="entry name" value="Gamma Fibrinogen, chain A, domain 1"/>
    <property type="match status" value="1"/>
</dbReference>
<dbReference type="InterPro" id="IPR008160">
    <property type="entry name" value="Collagen"/>
</dbReference>
<dbReference type="InterPro" id="IPR036056">
    <property type="entry name" value="Fibrinogen-like_C"/>
</dbReference>
<dbReference type="InterPro" id="IPR014716">
    <property type="entry name" value="Fibrinogen_a/b/g_C_1"/>
</dbReference>
<dbReference type="InterPro" id="IPR002181">
    <property type="entry name" value="Fibrinogen_a/b/g_C_dom"/>
</dbReference>
<dbReference type="InterPro" id="IPR050373">
    <property type="entry name" value="Fibrinogen_C-term_domain"/>
</dbReference>
<dbReference type="InterPro" id="IPR020837">
    <property type="entry name" value="Fibrinogen_CS"/>
</dbReference>
<dbReference type="NCBIfam" id="NF040941">
    <property type="entry name" value="GGGWT_bact"/>
    <property type="match status" value="1"/>
</dbReference>
<dbReference type="PANTHER" id="PTHR19143">
    <property type="entry name" value="FIBRINOGEN/TENASCIN/ANGIOPOEITIN"/>
    <property type="match status" value="1"/>
</dbReference>
<dbReference type="PANTHER" id="PTHR19143:SF337">
    <property type="entry name" value="FICOLIN-1"/>
    <property type="match status" value="1"/>
</dbReference>
<dbReference type="Pfam" id="PF01391">
    <property type="entry name" value="Collagen"/>
    <property type="match status" value="1"/>
</dbReference>
<dbReference type="Pfam" id="PF00147">
    <property type="entry name" value="Fibrinogen_C"/>
    <property type="match status" value="1"/>
</dbReference>
<dbReference type="SMART" id="SM00186">
    <property type="entry name" value="FBG"/>
    <property type="match status" value="1"/>
</dbReference>
<dbReference type="SUPFAM" id="SSF56496">
    <property type="entry name" value="Fibrinogen C-terminal domain-like"/>
    <property type="match status" value="1"/>
</dbReference>
<dbReference type="PROSITE" id="PS00514">
    <property type="entry name" value="FIBRINOGEN_C_1"/>
    <property type="match status" value="1"/>
</dbReference>
<dbReference type="PROSITE" id="PS51406">
    <property type="entry name" value="FIBRINOGEN_C_2"/>
    <property type="match status" value="1"/>
</dbReference>